<dbReference type="EMBL" id="AB237912">
    <property type="protein sequence ID" value="BAE46633.1"/>
    <property type="molecule type" value="Genomic_DNA"/>
</dbReference>
<dbReference type="RefSeq" id="YP_358658.1">
    <property type="nucleotide sequence ID" value="NC_007500.1"/>
</dbReference>
<dbReference type="SMR" id="Q3C1H3"/>
<dbReference type="GeneID" id="3735052"/>
<dbReference type="KEGG" id="nsy:3735052"/>
<dbReference type="OrthoDB" id="24180at4085"/>
<dbReference type="Proteomes" id="UP000189701">
    <property type="component" value="Chloroplast Pltd"/>
</dbReference>
<dbReference type="GO" id="GO:0009535">
    <property type="term" value="C:chloroplast thylakoid membrane"/>
    <property type="evidence" value="ECO:0007669"/>
    <property type="project" value="UniProtKB-SubCell"/>
</dbReference>
<dbReference type="GO" id="GO:0045259">
    <property type="term" value="C:proton-transporting ATP synthase complex"/>
    <property type="evidence" value="ECO:0007669"/>
    <property type="project" value="UniProtKB-KW"/>
</dbReference>
<dbReference type="GO" id="GO:0046933">
    <property type="term" value="F:proton-transporting ATP synthase activity, rotational mechanism"/>
    <property type="evidence" value="ECO:0007669"/>
    <property type="project" value="UniProtKB-UniRule"/>
</dbReference>
<dbReference type="CDD" id="cd06503">
    <property type="entry name" value="ATP-synt_Fo_b"/>
    <property type="match status" value="1"/>
</dbReference>
<dbReference type="HAMAP" id="MF_01398">
    <property type="entry name" value="ATP_synth_b_bprime"/>
    <property type="match status" value="1"/>
</dbReference>
<dbReference type="InterPro" id="IPR002146">
    <property type="entry name" value="ATP_synth_b/b'su_bac/chlpt"/>
</dbReference>
<dbReference type="PANTHER" id="PTHR34264">
    <property type="entry name" value="ATP SYNTHASE SUBUNIT B, CHLOROPLASTIC"/>
    <property type="match status" value="1"/>
</dbReference>
<dbReference type="PANTHER" id="PTHR34264:SF3">
    <property type="entry name" value="ATP SYNTHASE SUBUNIT B, CHLOROPLASTIC"/>
    <property type="match status" value="1"/>
</dbReference>
<dbReference type="Pfam" id="PF00430">
    <property type="entry name" value="ATP-synt_B"/>
    <property type="match status" value="1"/>
</dbReference>
<protein>
    <recommendedName>
        <fullName evidence="1">ATP synthase subunit b, chloroplastic</fullName>
    </recommendedName>
    <alternativeName>
        <fullName evidence="1">ATP synthase F(0) sector subunit b</fullName>
    </alternativeName>
    <alternativeName>
        <fullName evidence="1">ATPase subunit I</fullName>
    </alternativeName>
</protein>
<sequence length="184" mass="20858">MKNVTDSFVSLGHWPSAGSFGFNTDILATNPINLSVVLGVLIFFGKGVLSDLLDNRKQRILNTIRNSEELRGGAIEQLEKARSRLRKVESEAEQFRVNGYSEIEREKLNLINSTYKTLEQLENYKNETIQFEQQRAINQVRQRVFQQALRGALGTLNSCLNNELHLRTISANIGMLGTMKEITD</sequence>
<feature type="chain" id="PRO_0000368955" description="ATP synthase subunit b, chloroplastic">
    <location>
        <begin position="1"/>
        <end position="184"/>
    </location>
</feature>
<feature type="transmembrane region" description="Helical" evidence="1">
    <location>
        <begin position="27"/>
        <end position="49"/>
    </location>
</feature>
<gene>
    <name evidence="1" type="primary">atpF</name>
</gene>
<name>ATPF_NICSY</name>
<geneLocation type="chloroplast"/>
<evidence type="ECO:0000255" key="1">
    <source>
        <dbReference type="HAMAP-Rule" id="MF_01398"/>
    </source>
</evidence>
<proteinExistence type="inferred from homology"/>
<reference key="1">
    <citation type="journal article" date="2006" name="Mol. Genet. Genomics">
        <title>The chloroplast genome of Nicotiana sylvestris and Nicotiana tomentosiformis: complete sequencing confirms that the Nicotiana sylvestris progenitor is the maternal genome donor of Nicotiana tabacum.</title>
        <authorList>
            <person name="Yukawa M."/>
            <person name="Tsudzuki T."/>
            <person name="Sugiura M."/>
        </authorList>
    </citation>
    <scope>NUCLEOTIDE SEQUENCE [LARGE SCALE GENOMIC DNA]</scope>
</reference>
<organism>
    <name type="scientific">Nicotiana sylvestris</name>
    <name type="common">Wood tobacco</name>
    <name type="synonym">South American tobacco</name>
    <dbReference type="NCBI Taxonomy" id="4096"/>
    <lineage>
        <taxon>Eukaryota</taxon>
        <taxon>Viridiplantae</taxon>
        <taxon>Streptophyta</taxon>
        <taxon>Embryophyta</taxon>
        <taxon>Tracheophyta</taxon>
        <taxon>Spermatophyta</taxon>
        <taxon>Magnoliopsida</taxon>
        <taxon>eudicotyledons</taxon>
        <taxon>Gunneridae</taxon>
        <taxon>Pentapetalae</taxon>
        <taxon>asterids</taxon>
        <taxon>lamiids</taxon>
        <taxon>Solanales</taxon>
        <taxon>Solanaceae</taxon>
        <taxon>Nicotianoideae</taxon>
        <taxon>Nicotianeae</taxon>
        <taxon>Nicotiana</taxon>
    </lineage>
</organism>
<accession>Q3C1H3</accession>
<comment type="function">
    <text evidence="1">F(1)F(0) ATP synthase produces ATP from ADP in the presence of a proton or sodium gradient. F-type ATPases consist of two structural domains, F(1) containing the extramembraneous catalytic core and F(0) containing the membrane proton channel, linked together by a central stalk and a peripheral stalk. During catalysis, ATP synthesis in the catalytic domain of F(1) is coupled via a rotary mechanism of the central stalk subunits to proton translocation.</text>
</comment>
<comment type="function">
    <text evidence="1">Component of the F(0) channel, it forms part of the peripheral stalk, linking F(1) to F(0).</text>
</comment>
<comment type="subunit">
    <text evidence="1">F-type ATPases have 2 components, F(1) - the catalytic core - and F(0) - the membrane proton channel. F(1) has five subunits: alpha(3), beta(3), gamma(1), delta(1), epsilon(1). F(0) has four main subunits: a(1), b(1), b'(1) and c(10-14). The alpha and beta chains form an alternating ring which encloses part of the gamma chain. F(1) is attached to F(0) by a central stalk formed by the gamma and epsilon chains, while a peripheral stalk is formed by the delta, b and b' chains.</text>
</comment>
<comment type="subcellular location">
    <subcellularLocation>
        <location evidence="1">Plastid</location>
        <location evidence="1">Chloroplast thylakoid membrane</location>
        <topology evidence="1">Single-pass membrane protein</topology>
    </subcellularLocation>
</comment>
<comment type="miscellaneous">
    <text>In plastids the F-type ATPase is also known as CF(1)CF(0).</text>
</comment>
<comment type="similarity">
    <text evidence="1">Belongs to the ATPase B chain family.</text>
</comment>
<keyword id="KW-0066">ATP synthesis</keyword>
<keyword id="KW-0138">CF(0)</keyword>
<keyword id="KW-0150">Chloroplast</keyword>
<keyword id="KW-0375">Hydrogen ion transport</keyword>
<keyword id="KW-0406">Ion transport</keyword>
<keyword id="KW-0472">Membrane</keyword>
<keyword id="KW-0934">Plastid</keyword>
<keyword id="KW-1185">Reference proteome</keyword>
<keyword id="KW-0793">Thylakoid</keyword>
<keyword id="KW-0812">Transmembrane</keyword>
<keyword id="KW-1133">Transmembrane helix</keyword>
<keyword id="KW-0813">Transport</keyword>